<feature type="chain" id="PRO_0000137863" description="Argininosuccinate lyase">
    <location>
        <begin position="1"/>
        <end position="508"/>
    </location>
</feature>
<protein>
    <recommendedName>
        <fullName evidence="1">Argininosuccinate lyase</fullName>
        <shortName evidence="1">ASAL</shortName>
        <ecNumber evidence="1">4.3.2.1</ecNumber>
    </recommendedName>
    <alternativeName>
        <fullName evidence="1">Arginosuccinase</fullName>
    </alternativeName>
</protein>
<gene>
    <name evidence="1" type="primary">argH</name>
    <name type="ordered locus">MK0622</name>
</gene>
<keyword id="KW-0028">Amino-acid biosynthesis</keyword>
<keyword id="KW-0055">Arginine biosynthesis</keyword>
<keyword id="KW-0963">Cytoplasm</keyword>
<keyword id="KW-0456">Lyase</keyword>
<keyword id="KW-1185">Reference proteome</keyword>
<proteinExistence type="inferred from homology"/>
<sequence>MALGRPSYRGGRVSGGRDPDFAELSSSLEQDREIFHCDVWNSVVHAVSLWEAGRIDRSTAAGIVEGLVTVLEEGPDRLPEDAEDVHEAIESRLHEVVGEEAGWLQLGRSRNDQVATSVRMRLRERALDLSRELVGLGRALLDLAREHAEVPIAGYTHLKRAQPCTIGFWMSTYAAAVARSARGLLRVPGMDECPLGCSAFPGSTVPVDRHREAALLGFRKPARHCGEATALRGPILEFLGRLATAASELTRLAGDLIQLCSDELGVVEPPDELSSTSSVMPHKKNPDALELVRAELTVVAGLKGLGDAVHGKLPMFYNRDLQVLNGLLWDSVNRFELCVRVLRKVVEGLDVDEEAARGTVLGSHAAAVDLAELVAERAGLTFREAHKVVGRVSARLDREGVPMSPERADRVVEELEREGVKLRVEEVREVLSLKRTLRRPVEGSTDPGRLEVTLDRLRAELAAAERLEGTWRGRIERALRATEAAVNRLGVEGFAEVYRGYWDGEAPG</sequence>
<reference key="1">
    <citation type="journal article" date="2002" name="Proc. Natl. Acad. Sci. U.S.A.">
        <title>The complete genome of hyperthermophile Methanopyrus kandleri AV19 and monophyly of archaeal methanogens.</title>
        <authorList>
            <person name="Slesarev A.I."/>
            <person name="Mezhevaya K.V."/>
            <person name="Makarova K.S."/>
            <person name="Polushin N.N."/>
            <person name="Shcherbinina O.V."/>
            <person name="Shakhova V.V."/>
            <person name="Belova G.I."/>
            <person name="Aravind L."/>
            <person name="Natale D.A."/>
            <person name="Rogozin I.B."/>
            <person name="Tatusov R.L."/>
            <person name="Wolf Y.I."/>
            <person name="Stetter K.O."/>
            <person name="Malykh A.G."/>
            <person name="Koonin E.V."/>
            <person name="Kozyavkin S.A."/>
        </authorList>
    </citation>
    <scope>NUCLEOTIDE SEQUENCE [LARGE SCALE GENOMIC DNA]</scope>
    <source>
        <strain>AV19 / DSM 6324 / JCM 9639 / NBRC 100938</strain>
    </source>
</reference>
<dbReference type="EC" id="4.3.2.1" evidence="1"/>
<dbReference type="EMBL" id="AE009439">
    <property type="protein sequence ID" value="AAM01837.1"/>
    <property type="molecule type" value="Genomic_DNA"/>
</dbReference>
<dbReference type="RefSeq" id="WP_011018992.1">
    <property type="nucleotide sequence ID" value="NC_003551.1"/>
</dbReference>
<dbReference type="SMR" id="Q8TXN9"/>
<dbReference type="FunCoup" id="Q8TXN9">
    <property type="interactions" value="177"/>
</dbReference>
<dbReference type="STRING" id="190192.MK0622"/>
<dbReference type="PaxDb" id="190192-MK0622"/>
<dbReference type="EnsemblBacteria" id="AAM01837">
    <property type="protein sequence ID" value="AAM01837"/>
    <property type="gene ID" value="MK0622"/>
</dbReference>
<dbReference type="GeneID" id="1476723"/>
<dbReference type="KEGG" id="mka:MK0622"/>
<dbReference type="HOGENOM" id="CLU_027272_2_0_2"/>
<dbReference type="InParanoid" id="Q8TXN9"/>
<dbReference type="OrthoDB" id="27337at2157"/>
<dbReference type="UniPathway" id="UPA00068">
    <property type="reaction ID" value="UER00114"/>
</dbReference>
<dbReference type="Proteomes" id="UP000001826">
    <property type="component" value="Chromosome"/>
</dbReference>
<dbReference type="GO" id="GO:0005829">
    <property type="term" value="C:cytosol"/>
    <property type="evidence" value="ECO:0007669"/>
    <property type="project" value="TreeGrafter"/>
</dbReference>
<dbReference type="GO" id="GO:0004056">
    <property type="term" value="F:argininosuccinate lyase activity"/>
    <property type="evidence" value="ECO:0007669"/>
    <property type="project" value="UniProtKB-UniRule"/>
</dbReference>
<dbReference type="GO" id="GO:0042450">
    <property type="term" value="P:arginine biosynthetic process via ornithine"/>
    <property type="evidence" value="ECO:0007669"/>
    <property type="project" value="InterPro"/>
</dbReference>
<dbReference type="GO" id="GO:0006526">
    <property type="term" value="P:L-arginine biosynthetic process"/>
    <property type="evidence" value="ECO:0007669"/>
    <property type="project" value="UniProtKB-UniRule"/>
</dbReference>
<dbReference type="CDD" id="cd01359">
    <property type="entry name" value="Argininosuccinate_lyase"/>
    <property type="match status" value="1"/>
</dbReference>
<dbReference type="Gene3D" id="1.10.40.30">
    <property type="entry name" value="Fumarase/aspartase (C-terminal domain)"/>
    <property type="match status" value="1"/>
</dbReference>
<dbReference type="Gene3D" id="1.20.200.10">
    <property type="entry name" value="Fumarase/aspartase (Central domain)"/>
    <property type="match status" value="1"/>
</dbReference>
<dbReference type="Gene3D" id="1.10.275.10">
    <property type="entry name" value="Fumarase/aspartase (N-terminal domain)"/>
    <property type="match status" value="1"/>
</dbReference>
<dbReference type="HAMAP" id="MF_00006">
    <property type="entry name" value="Arg_succ_lyase"/>
    <property type="match status" value="1"/>
</dbReference>
<dbReference type="InterPro" id="IPR029419">
    <property type="entry name" value="Arg_succ_lyase_C"/>
</dbReference>
<dbReference type="InterPro" id="IPR009049">
    <property type="entry name" value="Argininosuccinate_lyase"/>
</dbReference>
<dbReference type="InterPro" id="IPR024083">
    <property type="entry name" value="Fumarase/histidase_N"/>
</dbReference>
<dbReference type="InterPro" id="IPR000362">
    <property type="entry name" value="Fumarate_lyase_fam"/>
</dbReference>
<dbReference type="InterPro" id="IPR022761">
    <property type="entry name" value="Fumarate_lyase_N"/>
</dbReference>
<dbReference type="InterPro" id="IPR008948">
    <property type="entry name" value="L-Aspartase-like"/>
</dbReference>
<dbReference type="NCBIfam" id="TIGR00838">
    <property type="entry name" value="argH"/>
    <property type="match status" value="1"/>
</dbReference>
<dbReference type="PANTHER" id="PTHR43814">
    <property type="entry name" value="ARGININOSUCCINATE LYASE"/>
    <property type="match status" value="1"/>
</dbReference>
<dbReference type="PANTHER" id="PTHR43814:SF1">
    <property type="entry name" value="ARGININOSUCCINATE LYASE"/>
    <property type="match status" value="1"/>
</dbReference>
<dbReference type="Pfam" id="PF14698">
    <property type="entry name" value="ASL_C2"/>
    <property type="match status" value="1"/>
</dbReference>
<dbReference type="Pfam" id="PF00206">
    <property type="entry name" value="Lyase_1"/>
    <property type="match status" value="1"/>
</dbReference>
<dbReference type="PRINTS" id="PR00145">
    <property type="entry name" value="ARGSUCLYASE"/>
</dbReference>
<dbReference type="PRINTS" id="PR00149">
    <property type="entry name" value="FUMRATELYASE"/>
</dbReference>
<dbReference type="SUPFAM" id="SSF48557">
    <property type="entry name" value="L-aspartase-like"/>
    <property type="match status" value="1"/>
</dbReference>
<comment type="catalytic activity">
    <reaction evidence="1">
        <text>2-(N(omega)-L-arginino)succinate = fumarate + L-arginine</text>
        <dbReference type="Rhea" id="RHEA:24020"/>
        <dbReference type="ChEBI" id="CHEBI:29806"/>
        <dbReference type="ChEBI" id="CHEBI:32682"/>
        <dbReference type="ChEBI" id="CHEBI:57472"/>
        <dbReference type="EC" id="4.3.2.1"/>
    </reaction>
</comment>
<comment type="pathway">
    <text evidence="1">Amino-acid biosynthesis; L-arginine biosynthesis; L-arginine from L-ornithine and carbamoyl phosphate: step 3/3.</text>
</comment>
<comment type="subcellular location">
    <subcellularLocation>
        <location evidence="1">Cytoplasm</location>
    </subcellularLocation>
</comment>
<comment type="similarity">
    <text evidence="1">Belongs to the lyase 1 family. Argininosuccinate lyase subfamily.</text>
</comment>
<evidence type="ECO:0000255" key="1">
    <source>
        <dbReference type="HAMAP-Rule" id="MF_00006"/>
    </source>
</evidence>
<accession>Q8TXN9</accession>
<name>ARLY_METKA</name>
<organism>
    <name type="scientific">Methanopyrus kandleri (strain AV19 / DSM 6324 / JCM 9639 / NBRC 100938)</name>
    <dbReference type="NCBI Taxonomy" id="190192"/>
    <lineage>
        <taxon>Archaea</taxon>
        <taxon>Methanobacteriati</taxon>
        <taxon>Methanobacteriota</taxon>
        <taxon>Methanomada group</taxon>
        <taxon>Methanopyri</taxon>
        <taxon>Methanopyrales</taxon>
        <taxon>Methanopyraceae</taxon>
        <taxon>Methanopyrus</taxon>
    </lineage>
</organism>